<feature type="chain" id="PRO_1000082687" description="UDP-N-acetylmuramoylalanine--D-glutamate ligase">
    <location>
        <begin position="1"/>
        <end position="449"/>
    </location>
</feature>
<feature type="binding site" evidence="1">
    <location>
        <begin position="113"/>
        <end position="119"/>
    </location>
    <ligand>
        <name>ATP</name>
        <dbReference type="ChEBI" id="CHEBI:30616"/>
    </ligand>
</feature>
<reference key="1">
    <citation type="journal article" date="2007" name="DNA Res.">
        <title>Complete genomic structure of the bloom-forming toxic cyanobacterium Microcystis aeruginosa NIES-843.</title>
        <authorList>
            <person name="Kaneko T."/>
            <person name="Nakajima N."/>
            <person name="Okamoto S."/>
            <person name="Suzuki I."/>
            <person name="Tanabe Y."/>
            <person name="Tamaoki M."/>
            <person name="Nakamura Y."/>
            <person name="Kasai F."/>
            <person name="Watanabe A."/>
            <person name="Kawashima K."/>
            <person name="Kishida Y."/>
            <person name="Ono A."/>
            <person name="Shimizu Y."/>
            <person name="Takahashi C."/>
            <person name="Minami C."/>
            <person name="Fujishiro T."/>
            <person name="Kohara M."/>
            <person name="Katoh M."/>
            <person name="Nakazaki N."/>
            <person name="Nakayama S."/>
            <person name="Yamada M."/>
            <person name="Tabata S."/>
            <person name="Watanabe M.M."/>
        </authorList>
    </citation>
    <scope>NUCLEOTIDE SEQUENCE [LARGE SCALE GENOMIC DNA]</scope>
    <source>
        <strain>NIES-843 / IAM M-247</strain>
    </source>
</reference>
<proteinExistence type="inferred from homology"/>
<dbReference type="EC" id="6.3.2.9" evidence="1"/>
<dbReference type="EMBL" id="AP009552">
    <property type="protein sequence ID" value="BAG00779.1"/>
    <property type="molecule type" value="Genomic_DNA"/>
</dbReference>
<dbReference type="RefSeq" id="WP_004163487.1">
    <property type="nucleotide sequence ID" value="NC_010296.1"/>
</dbReference>
<dbReference type="SMR" id="B0JRM9"/>
<dbReference type="STRING" id="449447.MAE_09570"/>
<dbReference type="PaxDb" id="449447-MAE_09570"/>
<dbReference type="EnsemblBacteria" id="BAG00779">
    <property type="protein sequence ID" value="BAG00779"/>
    <property type="gene ID" value="MAE_09570"/>
</dbReference>
<dbReference type="KEGG" id="mar:MAE_09570"/>
<dbReference type="eggNOG" id="COG0771">
    <property type="taxonomic scope" value="Bacteria"/>
</dbReference>
<dbReference type="HOGENOM" id="CLU_032540_0_0_3"/>
<dbReference type="BioCyc" id="MAER449447:MAE_RS04210-MONOMER"/>
<dbReference type="UniPathway" id="UPA00219"/>
<dbReference type="Proteomes" id="UP000001510">
    <property type="component" value="Chromosome"/>
</dbReference>
<dbReference type="GO" id="GO:0005737">
    <property type="term" value="C:cytoplasm"/>
    <property type="evidence" value="ECO:0007669"/>
    <property type="project" value="UniProtKB-SubCell"/>
</dbReference>
<dbReference type="GO" id="GO:0005524">
    <property type="term" value="F:ATP binding"/>
    <property type="evidence" value="ECO:0007669"/>
    <property type="project" value="UniProtKB-UniRule"/>
</dbReference>
<dbReference type="GO" id="GO:0008764">
    <property type="term" value="F:UDP-N-acetylmuramoylalanine-D-glutamate ligase activity"/>
    <property type="evidence" value="ECO:0007669"/>
    <property type="project" value="UniProtKB-UniRule"/>
</dbReference>
<dbReference type="GO" id="GO:0051301">
    <property type="term" value="P:cell division"/>
    <property type="evidence" value="ECO:0007669"/>
    <property type="project" value="UniProtKB-KW"/>
</dbReference>
<dbReference type="GO" id="GO:0071555">
    <property type="term" value="P:cell wall organization"/>
    <property type="evidence" value="ECO:0007669"/>
    <property type="project" value="UniProtKB-KW"/>
</dbReference>
<dbReference type="GO" id="GO:0009252">
    <property type="term" value="P:peptidoglycan biosynthetic process"/>
    <property type="evidence" value="ECO:0007669"/>
    <property type="project" value="UniProtKB-UniRule"/>
</dbReference>
<dbReference type="GO" id="GO:0008360">
    <property type="term" value="P:regulation of cell shape"/>
    <property type="evidence" value="ECO:0007669"/>
    <property type="project" value="UniProtKB-KW"/>
</dbReference>
<dbReference type="Gene3D" id="3.90.190.20">
    <property type="entry name" value="Mur ligase, C-terminal domain"/>
    <property type="match status" value="1"/>
</dbReference>
<dbReference type="Gene3D" id="3.40.1190.10">
    <property type="entry name" value="Mur-like, catalytic domain"/>
    <property type="match status" value="1"/>
</dbReference>
<dbReference type="Gene3D" id="3.40.50.720">
    <property type="entry name" value="NAD(P)-binding Rossmann-like Domain"/>
    <property type="match status" value="1"/>
</dbReference>
<dbReference type="HAMAP" id="MF_00639">
    <property type="entry name" value="MurD"/>
    <property type="match status" value="1"/>
</dbReference>
<dbReference type="InterPro" id="IPR036565">
    <property type="entry name" value="Mur-like_cat_sf"/>
</dbReference>
<dbReference type="InterPro" id="IPR004101">
    <property type="entry name" value="Mur_ligase_C"/>
</dbReference>
<dbReference type="InterPro" id="IPR036615">
    <property type="entry name" value="Mur_ligase_C_dom_sf"/>
</dbReference>
<dbReference type="InterPro" id="IPR013221">
    <property type="entry name" value="Mur_ligase_cen"/>
</dbReference>
<dbReference type="InterPro" id="IPR005762">
    <property type="entry name" value="MurD"/>
</dbReference>
<dbReference type="NCBIfam" id="TIGR01087">
    <property type="entry name" value="murD"/>
    <property type="match status" value="1"/>
</dbReference>
<dbReference type="PANTHER" id="PTHR43692">
    <property type="entry name" value="UDP-N-ACETYLMURAMOYLALANINE--D-GLUTAMATE LIGASE"/>
    <property type="match status" value="1"/>
</dbReference>
<dbReference type="PANTHER" id="PTHR43692:SF1">
    <property type="entry name" value="UDP-N-ACETYLMURAMOYLALANINE--D-GLUTAMATE LIGASE"/>
    <property type="match status" value="1"/>
</dbReference>
<dbReference type="Pfam" id="PF02875">
    <property type="entry name" value="Mur_ligase_C"/>
    <property type="match status" value="1"/>
</dbReference>
<dbReference type="Pfam" id="PF08245">
    <property type="entry name" value="Mur_ligase_M"/>
    <property type="match status" value="1"/>
</dbReference>
<dbReference type="Pfam" id="PF21799">
    <property type="entry name" value="MurD-like_N"/>
    <property type="match status" value="1"/>
</dbReference>
<dbReference type="SUPFAM" id="SSF51984">
    <property type="entry name" value="MurCD N-terminal domain"/>
    <property type="match status" value="1"/>
</dbReference>
<dbReference type="SUPFAM" id="SSF53623">
    <property type="entry name" value="MurD-like peptide ligases, catalytic domain"/>
    <property type="match status" value="1"/>
</dbReference>
<dbReference type="SUPFAM" id="SSF53244">
    <property type="entry name" value="MurD-like peptide ligases, peptide-binding domain"/>
    <property type="match status" value="1"/>
</dbReference>
<sequence length="449" mass="48677">MAKAAIIGLGRSGIAAARCLKRDGWQVTLSDRSDSPSLQATKTNLEREGIIVNLGQNLSLEASDLPNLIVVSPGVPWDAPILITAREKGIDTIGELELAWRYLQSSPWLGITGTNGKTTTTALCAAIFQKAGLNAPSCGNIGYAACELALKADKYDWIIAEISSYQIESSRDLSPKIGIWTTFTPDHLSRHQTLENYYQIKASLLQRSDRQILNGDDPYLRQIGVSQWQQAYWTSVQGKAALLGDPSRGVYLQDNWIVAFGELIAPVNLLKMVGSHNQQNLLMAVAAARLAGIEKKAITEAIATFPGVAHRLEYVCTYKGLDFINDSKATNYDAAAVGLQSVPSPAILIAGGEAKAGDDRAWIAEIKAKVATVLLIGDAAADFARRLQSAGYQDYECVETMDRAVQRAAELGPAKEAKVVLLSPACASFDQYPSFEHRGTHFRQLSLQL</sequence>
<organism>
    <name type="scientific">Microcystis aeruginosa (strain NIES-843 / IAM M-2473)</name>
    <dbReference type="NCBI Taxonomy" id="449447"/>
    <lineage>
        <taxon>Bacteria</taxon>
        <taxon>Bacillati</taxon>
        <taxon>Cyanobacteriota</taxon>
        <taxon>Cyanophyceae</taxon>
        <taxon>Oscillatoriophycideae</taxon>
        <taxon>Chroococcales</taxon>
        <taxon>Microcystaceae</taxon>
        <taxon>Microcystis</taxon>
    </lineage>
</organism>
<name>MURD_MICAN</name>
<comment type="function">
    <text evidence="1">Cell wall formation. Catalyzes the addition of glutamate to the nucleotide precursor UDP-N-acetylmuramoyl-L-alanine (UMA).</text>
</comment>
<comment type="catalytic activity">
    <reaction evidence="1">
        <text>UDP-N-acetyl-alpha-D-muramoyl-L-alanine + D-glutamate + ATP = UDP-N-acetyl-alpha-D-muramoyl-L-alanyl-D-glutamate + ADP + phosphate + H(+)</text>
        <dbReference type="Rhea" id="RHEA:16429"/>
        <dbReference type="ChEBI" id="CHEBI:15378"/>
        <dbReference type="ChEBI" id="CHEBI:29986"/>
        <dbReference type="ChEBI" id="CHEBI:30616"/>
        <dbReference type="ChEBI" id="CHEBI:43474"/>
        <dbReference type="ChEBI" id="CHEBI:83898"/>
        <dbReference type="ChEBI" id="CHEBI:83900"/>
        <dbReference type="ChEBI" id="CHEBI:456216"/>
        <dbReference type="EC" id="6.3.2.9"/>
    </reaction>
</comment>
<comment type="pathway">
    <text evidence="1">Cell wall biogenesis; peptidoglycan biosynthesis.</text>
</comment>
<comment type="subcellular location">
    <subcellularLocation>
        <location evidence="1">Cytoplasm</location>
    </subcellularLocation>
</comment>
<comment type="similarity">
    <text evidence="1">Belongs to the MurCDEF family.</text>
</comment>
<keyword id="KW-0067">ATP-binding</keyword>
<keyword id="KW-0131">Cell cycle</keyword>
<keyword id="KW-0132">Cell division</keyword>
<keyword id="KW-0133">Cell shape</keyword>
<keyword id="KW-0961">Cell wall biogenesis/degradation</keyword>
<keyword id="KW-0963">Cytoplasm</keyword>
<keyword id="KW-0436">Ligase</keyword>
<keyword id="KW-0547">Nucleotide-binding</keyword>
<keyword id="KW-0573">Peptidoglycan synthesis</keyword>
<protein>
    <recommendedName>
        <fullName evidence="1">UDP-N-acetylmuramoylalanine--D-glutamate ligase</fullName>
        <ecNumber evidence="1">6.3.2.9</ecNumber>
    </recommendedName>
    <alternativeName>
        <fullName evidence="1">D-glutamic acid-adding enzyme</fullName>
    </alternativeName>
    <alternativeName>
        <fullName evidence="1">UDP-N-acetylmuramoyl-L-alanyl-D-glutamate synthetase</fullName>
    </alternativeName>
</protein>
<accession>B0JRM9</accession>
<gene>
    <name evidence="1" type="primary">murD</name>
    <name type="ordered locus">MAE_09570</name>
</gene>
<evidence type="ECO:0000255" key="1">
    <source>
        <dbReference type="HAMAP-Rule" id="MF_00639"/>
    </source>
</evidence>